<dbReference type="EC" id="1.15.1.1"/>
<dbReference type="EMBL" id="AE005674">
    <property type="protein sequence ID" value="AAN45419.2"/>
    <property type="molecule type" value="Genomic_DNA"/>
</dbReference>
<dbReference type="EMBL" id="AE014073">
    <property type="protein sequence ID" value="AAP18781.1"/>
    <property type="molecule type" value="Genomic_DNA"/>
</dbReference>
<dbReference type="RefSeq" id="NP_709712.2">
    <property type="nucleotide sequence ID" value="NC_004337.2"/>
</dbReference>
<dbReference type="RefSeq" id="WP_001297064.1">
    <property type="nucleotide sequence ID" value="NZ_WPGW01000095.1"/>
</dbReference>
<dbReference type="SMR" id="P66829"/>
<dbReference type="STRING" id="198214.SF3985"/>
<dbReference type="PaxDb" id="198214-SF3985"/>
<dbReference type="GeneID" id="1027762"/>
<dbReference type="GeneID" id="93778030"/>
<dbReference type="KEGG" id="sfl:SF3985"/>
<dbReference type="KEGG" id="sfx:S3763"/>
<dbReference type="PATRIC" id="fig|198214.7.peg.4696"/>
<dbReference type="HOGENOM" id="CLU_031625_0_1_6"/>
<dbReference type="Proteomes" id="UP000001006">
    <property type="component" value="Chromosome"/>
</dbReference>
<dbReference type="Proteomes" id="UP000002673">
    <property type="component" value="Chromosome"/>
</dbReference>
<dbReference type="GO" id="GO:0005737">
    <property type="term" value="C:cytoplasm"/>
    <property type="evidence" value="ECO:0007669"/>
    <property type="project" value="TreeGrafter"/>
</dbReference>
<dbReference type="GO" id="GO:0046872">
    <property type="term" value="F:metal ion binding"/>
    <property type="evidence" value="ECO:0007669"/>
    <property type="project" value="UniProtKB-KW"/>
</dbReference>
<dbReference type="GO" id="GO:0004784">
    <property type="term" value="F:superoxide dismutase activity"/>
    <property type="evidence" value="ECO:0007669"/>
    <property type="project" value="UniProtKB-EC"/>
</dbReference>
<dbReference type="FunFam" id="1.10.287.990:FF:000001">
    <property type="entry name" value="Superoxide dismutase"/>
    <property type="match status" value="1"/>
</dbReference>
<dbReference type="FunFam" id="3.55.40.20:FF:000001">
    <property type="entry name" value="Superoxide dismutase"/>
    <property type="match status" value="1"/>
</dbReference>
<dbReference type="Gene3D" id="1.10.287.990">
    <property type="entry name" value="Fe,Mn superoxide dismutase (SOD) domain"/>
    <property type="match status" value="1"/>
</dbReference>
<dbReference type="Gene3D" id="3.55.40.20">
    <property type="entry name" value="Iron/manganese superoxide dismutase, C-terminal domain"/>
    <property type="match status" value="1"/>
</dbReference>
<dbReference type="InterPro" id="IPR001189">
    <property type="entry name" value="Mn/Fe_SOD"/>
</dbReference>
<dbReference type="InterPro" id="IPR019833">
    <property type="entry name" value="Mn/Fe_SOD_BS"/>
</dbReference>
<dbReference type="InterPro" id="IPR019832">
    <property type="entry name" value="Mn/Fe_SOD_C"/>
</dbReference>
<dbReference type="InterPro" id="IPR019831">
    <property type="entry name" value="Mn/Fe_SOD_N"/>
</dbReference>
<dbReference type="InterPro" id="IPR036324">
    <property type="entry name" value="Mn/Fe_SOD_N_sf"/>
</dbReference>
<dbReference type="InterPro" id="IPR036314">
    <property type="entry name" value="SOD_C_sf"/>
</dbReference>
<dbReference type="NCBIfam" id="NF008177">
    <property type="entry name" value="PRK10925.1"/>
    <property type="match status" value="1"/>
</dbReference>
<dbReference type="PANTHER" id="PTHR43595">
    <property type="entry name" value="37S RIBOSOMAL PROTEIN S26, MITOCHONDRIAL"/>
    <property type="match status" value="1"/>
</dbReference>
<dbReference type="PANTHER" id="PTHR43595:SF2">
    <property type="entry name" value="SMALL RIBOSOMAL SUBUNIT PROTEIN MS42"/>
    <property type="match status" value="1"/>
</dbReference>
<dbReference type="Pfam" id="PF02777">
    <property type="entry name" value="Sod_Fe_C"/>
    <property type="match status" value="1"/>
</dbReference>
<dbReference type="Pfam" id="PF00081">
    <property type="entry name" value="Sod_Fe_N"/>
    <property type="match status" value="1"/>
</dbReference>
<dbReference type="PIRSF" id="PIRSF000349">
    <property type="entry name" value="SODismutase"/>
    <property type="match status" value="1"/>
</dbReference>
<dbReference type="PRINTS" id="PR01703">
    <property type="entry name" value="MNSODISMTASE"/>
</dbReference>
<dbReference type="SUPFAM" id="SSF54719">
    <property type="entry name" value="Fe,Mn superoxide dismutase (SOD), C-terminal domain"/>
    <property type="match status" value="1"/>
</dbReference>
<dbReference type="SUPFAM" id="SSF46609">
    <property type="entry name" value="Fe,Mn superoxide dismutase (SOD), N-terminal domain"/>
    <property type="match status" value="1"/>
</dbReference>
<dbReference type="PROSITE" id="PS00088">
    <property type="entry name" value="SOD_MN"/>
    <property type="match status" value="1"/>
</dbReference>
<feature type="initiator methionine" description="Removed" evidence="1">
    <location>
        <position position="1"/>
    </location>
</feature>
<feature type="chain" id="PRO_0000160034" description="Superoxide dismutase [Mn]">
    <location>
        <begin position="2"/>
        <end position="206"/>
    </location>
</feature>
<feature type="binding site" evidence="1">
    <location>
        <position position="27"/>
    </location>
    <ligand>
        <name>Mn(2+)</name>
        <dbReference type="ChEBI" id="CHEBI:29035"/>
    </ligand>
</feature>
<feature type="binding site" evidence="1">
    <location>
        <position position="82"/>
    </location>
    <ligand>
        <name>Mn(2+)</name>
        <dbReference type="ChEBI" id="CHEBI:29035"/>
    </ligand>
</feature>
<feature type="binding site" evidence="1">
    <location>
        <position position="168"/>
    </location>
    <ligand>
        <name>Mn(2+)</name>
        <dbReference type="ChEBI" id="CHEBI:29035"/>
    </ligand>
</feature>
<feature type="binding site" evidence="1">
    <location>
        <position position="172"/>
    </location>
    <ligand>
        <name>Mn(2+)</name>
        <dbReference type="ChEBI" id="CHEBI:29035"/>
    </ligand>
</feature>
<name>SODM_SHIFL</name>
<sequence length="206" mass="23079">MSYTLPSLPYAYDALEPHFDKQTMEIHHTKHHQTYVNNANAALESLPEFANLPVEELITKLDQLPADKKTVLRNNAGGHANHSLFWKGLKKGTTLQGDLKAAIERDFGSVDNFKAEFEKAAASRFGSGWAWLVLKGDKLAVVSTANQDSPLMGEAISGASGFPILGLDVWEHAYYLKFQNRRPDYIKEFWNVVNWDEAAARFAAKK</sequence>
<keyword id="KW-0464">Manganese</keyword>
<keyword id="KW-0479">Metal-binding</keyword>
<keyword id="KW-0560">Oxidoreductase</keyword>
<keyword id="KW-1185">Reference proteome</keyword>
<proteinExistence type="inferred from homology"/>
<protein>
    <recommendedName>
        <fullName>Superoxide dismutase [Mn]</fullName>
        <ecNumber>1.15.1.1</ecNumber>
    </recommendedName>
    <alternativeName>
        <fullName>MnSOD</fullName>
    </alternativeName>
</protein>
<reference key="1">
    <citation type="journal article" date="2002" name="Nucleic Acids Res.">
        <title>Genome sequence of Shigella flexneri 2a: insights into pathogenicity through comparison with genomes of Escherichia coli K12 and O157.</title>
        <authorList>
            <person name="Jin Q."/>
            <person name="Yuan Z."/>
            <person name="Xu J."/>
            <person name="Wang Y."/>
            <person name="Shen Y."/>
            <person name="Lu W."/>
            <person name="Wang J."/>
            <person name="Liu H."/>
            <person name="Yang J."/>
            <person name="Yang F."/>
            <person name="Zhang X."/>
            <person name="Zhang J."/>
            <person name="Yang G."/>
            <person name="Wu H."/>
            <person name="Qu D."/>
            <person name="Dong J."/>
            <person name="Sun L."/>
            <person name="Xue Y."/>
            <person name="Zhao A."/>
            <person name="Gao Y."/>
            <person name="Zhu J."/>
            <person name="Kan B."/>
            <person name="Ding K."/>
            <person name="Chen S."/>
            <person name="Cheng H."/>
            <person name="Yao Z."/>
            <person name="He B."/>
            <person name="Chen R."/>
            <person name="Ma D."/>
            <person name="Qiang B."/>
            <person name="Wen Y."/>
            <person name="Hou Y."/>
            <person name="Yu J."/>
        </authorList>
    </citation>
    <scope>NUCLEOTIDE SEQUENCE [LARGE SCALE GENOMIC DNA]</scope>
    <source>
        <strain>301 / Serotype 2a</strain>
    </source>
</reference>
<reference key="2">
    <citation type="journal article" date="2003" name="Infect. Immun.">
        <title>Complete genome sequence and comparative genomics of Shigella flexneri serotype 2a strain 2457T.</title>
        <authorList>
            <person name="Wei J."/>
            <person name="Goldberg M.B."/>
            <person name="Burland V."/>
            <person name="Venkatesan M.M."/>
            <person name="Deng W."/>
            <person name="Fournier G."/>
            <person name="Mayhew G.F."/>
            <person name="Plunkett G. III"/>
            <person name="Rose D.J."/>
            <person name="Darling A."/>
            <person name="Mau B."/>
            <person name="Perna N.T."/>
            <person name="Payne S.M."/>
            <person name="Runyen-Janecky L.J."/>
            <person name="Zhou S."/>
            <person name="Schwartz D.C."/>
            <person name="Blattner F.R."/>
        </authorList>
    </citation>
    <scope>NUCLEOTIDE SEQUENCE [LARGE SCALE GENOMIC DNA]</scope>
    <source>
        <strain>ATCC 700930 / 2457T / Serotype 2a</strain>
    </source>
</reference>
<gene>
    <name type="primary">sodA</name>
    <name type="ordered locus">SF3985</name>
    <name type="ordered locus">S3763</name>
</gene>
<evidence type="ECO:0000250" key="1"/>
<evidence type="ECO:0000305" key="2"/>
<accession>P66829</accession>
<accession>Q8X7B2</accession>
<comment type="function">
    <text>Destroys superoxide anion radicals which are normally produced within the cells and which are toxic to biological systems.</text>
</comment>
<comment type="catalytic activity">
    <reaction>
        <text>2 superoxide + 2 H(+) = H2O2 + O2</text>
        <dbReference type="Rhea" id="RHEA:20696"/>
        <dbReference type="ChEBI" id="CHEBI:15378"/>
        <dbReference type="ChEBI" id="CHEBI:15379"/>
        <dbReference type="ChEBI" id="CHEBI:16240"/>
        <dbReference type="ChEBI" id="CHEBI:18421"/>
        <dbReference type="EC" id="1.15.1.1"/>
    </reaction>
</comment>
<comment type="cofactor">
    <cofactor evidence="1">
        <name>Mn(2+)</name>
        <dbReference type="ChEBI" id="CHEBI:29035"/>
    </cofactor>
    <text evidence="1">Binds 1 Mn(2+) ion per subunit.</text>
</comment>
<comment type="subunit">
    <text evidence="1">Homodimer.</text>
</comment>
<comment type="similarity">
    <text evidence="2">Belongs to the iron/manganese superoxide dismutase family.</text>
</comment>
<organism>
    <name type="scientific">Shigella flexneri</name>
    <dbReference type="NCBI Taxonomy" id="623"/>
    <lineage>
        <taxon>Bacteria</taxon>
        <taxon>Pseudomonadati</taxon>
        <taxon>Pseudomonadota</taxon>
        <taxon>Gammaproteobacteria</taxon>
        <taxon>Enterobacterales</taxon>
        <taxon>Enterobacteriaceae</taxon>
        <taxon>Shigella</taxon>
    </lineage>
</organism>